<reference key="1">
    <citation type="journal article" date="2005" name="Genome Res.">
        <title>Coping with cold: the genome of the versatile marine Antarctica bacterium Pseudoalteromonas haloplanktis TAC125.</title>
        <authorList>
            <person name="Medigue C."/>
            <person name="Krin E."/>
            <person name="Pascal G."/>
            <person name="Barbe V."/>
            <person name="Bernsel A."/>
            <person name="Bertin P.N."/>
            <person name="Cheung F."/>
            <person name="Cruveiller S."/>
            <person name="D'Amico S."/>
            <person name="Duilio A."/>
            <person name="Fang G."/>
            <person name="Feller G."/>
            <person name="Ho C."/>
            <person name="Mangenot S."/>
            <person name="Marino G."/>
            <person name="Nilsson J."/>
            <person name="Parrilli E."/>
            <person name="Rocha E.P.C."/>
            <person name="Rouy Z."/>
            <person name="Sekowska A."/>
            <person name="Tutino M.L."/>
            <person name="Vallenet D."/>
            <person name="von Heijne G."/>
            <person name="Danchin A."/>
        </authorList>
    </citation>
    <scope>NUCLEOTIDE SEQUENCE [LARGE SCALE GENOMIC DNA]</scope>
    <source>
        <strain>TAC 125</strain>
    </source>
</reference>
<proteinExistence type="inferred from homology"/>
<name>ACEK2_PSET1</name>
<organism>
    <name type="scientific">Pseudoalteromonas translucida (strain TAC 125)</name>
    <dbReference type="NCBI Taxonomy" id="326442"/>
    <lineage>
        <taxon>Bacteria</taxon>
        <taxon>Pseudomonadati</taxon>
        <taxon>Pseudomonadota</taxon>
        <taxon>Gammaproteobacteria</taxon>
        <taxon>Alteromonadales</taxon>
        <taxon>Pseudoalteromonadaceae</taxon>
        <taxon>Pseudoalteromonas</taxon>
    </lineage>
</organism>
<protein>
    <recommendedName>
        <fullName evidence="1">Isocitrate dehydrogenase kinase/phosphatase 2</fullName>
        <shortName evidence="1">IDH kinase/phosphatase 2</shortName>
        <shortName evidence="1">IDHK/P 2</shortName>
        <ecNumber evidence="1">2.7.11.5</ecNumber>
        <ecNumber evidence="1">3.1.3.-</ecNumber>
    </recommendedName>
</protein>
<evidence type="ECO:0000255" key="1">
    <source>
        <dbReference type="HAMAP-Rule" id="MF_00747"/>
    </source>
</evidence>
<gene>
    <name evidence="1" type="primary">aceK2</name>
    <name type="ordered locus">PSHAa1821</name>
</gene>
<sequence length="571" mass="66954">MQPRHIAELILTGFKKHYLLFQKTTAKAPLAFAKRDWQAINDISRLRISHYDDRVNETTATLRQQQTEQLDEQLWLEVKKLYQHFLCFHPQAELAETFYNSVFCRLYHRRYFHNDFIFVEATLKDAPAVPVEAEYRSYFPVVDGLKPTIKQIINHFDFKAPFVNLERDIRLLVKAFYKQAPDTHHKAWQMRFDILHTPFYRNKAAYIVGRVVSQSGVQPFIIAVLHHEDKGLYLDALLTKSSQMRVIFGFARAYFMVETHAPCALVRFLNQLMPNKTIAELYNAIGFHKQGKTEFYREFLNHLTHSNDEFTIAPGTPGMVMMVFTLPSFGYVFKVIKDKFGESKPFGRDTVLKRYQLVKKHDRVGRMADTIEYSNVVFPLARFDSNLLQQLHQTIGSSMVIEGDWLIIKHLYIERRMTPLNLFLENADDASAADAIEEYGQALKEMIAVNIFPGDMLLKNFGVSKHKRIIFYDYDEVQYLTDMNFRALPKAKTYDDYLMDEQSYSVAPQDVFPEQLCTFVMPNPIYKQFLMSTHPELIDVNFWKQAQQNIKNGQVSHIYPYPTAQRFIHHW</sequence>
<keyword id="KW-0067">ATP-binding</keyword>
<keyword id="KW-0963">Cytoplasm</keyword>
<keyword id="KW-0329">Glyoxylate bypass</keyword>
<keyword id="KW-0378">Hydrolase</keyword>
<keyword id="KW-0418">Kinase</keyword>
<keyword id="KW-0547">Nucleotide-binding</keyword>
<keyword id="KW-0904">Protein phosphatase</keyword>
<keyword id="KW-1185">Reference proteome</keyword>
<keyword id="KW-0723">Serine/threonine-protein kinase</keyword>
<keyword id="KW-0808">Transferase</keyword>
<keyword id="KW-0816">Tricarboxylic acid cycle</keyword>
<accession>Q3IHD9</accession>
<comment type="function">
    <text evidence="1">Bifunctional enzyme which can phosphorylate or dephosphorylate isocitrate dehydrogenase (IDH) on a specific serine residue. This is a regulatory mechanism which enables bacteria to bypass the Krebs cycle via the glyoxylate shunt in response to the source of carbon. When bacteria are grown on glucose, IDH is fully active and unphosphorylated, but when grown on acetate or ethanol, the activity of IDH declines drastically concomitant with its phosphorylation.</text>
</comment>
<comment type="catalytic activity">
    <reaction evidence="1">
        <text>L-seryl-[isocitrate dehydrogenase] + ATP = O-phospho-L-seryl-[isocitrate dehydrogenase] + ADP + H(+)</text>
        <dbReference type="Rhea" id="RHEA:43540"/>
        <dbReference type="Rhea" id="RHEA-COMP:10605"/>
        <dbReference type="Rhea" id="RHEA-COMP:10606"/>
        <dbReference type="ChEBI" id="CHEBI:15378"/>
        <dbReference type="ChEBI" id="CHEBI:29999"/>
        <dbReference type="ChEBI" id="CHEBI:30616"/>
        <dbReference type="ChEBI" id="CHEBI:83421"/>
        <dbReference type="ChEBI" id="CHEBI:456216"/>
        <dbReference type="EC" id="2.7.11.5"/>
    </reaction>
</comment>
<comment type="subcellular location">
    <subcellularLocation>
        <location evidence="1">Cytoplasm</location>
    </subcellularLocation>
</comment>
<comment type="similarity">
    <text evidence="1">Belongs to the AceK family.</text>
</comment>
<feature type="chain" id="PRO_0000288294" description="Isocitrate dehydrogenase kinase/phosphatase 2">
    <location>
        <begin position="1"/>
        <end position="571"/>
    </location>
</feature>
<feature type="active site" evidence="1">
    <location>
        <position position="369"/>
    </location>
</feature>
<feature type="binding site" evidence="1">
    <location>
        <begin position="313"/>
        <end position="319"/>
    </location>
    <ligand>
        <name>ATP</name>
        <dbReference type="ChEBI" id="CHEBI:30616"/>
    </ligand>
</feature>
<feature type="binding site" evidence="1">
    <location>
        <position position="334"/>
    </location>
    <ligand>
        <name>ATP</name>
        <dbReference type="ChEBI" id="CHEBI:30616"/>
    </ligand>
</feature>
<dbReference type="EC" id="2.7.11.5" evidence="1"/>
<dbReference type="EC" id="3.1.3.-" evidence="1"/>
<dbReference type="EMBL" id="CR954246">
    <property type="protein sequence ID" value="CAI86893.1"/>
    <property type="molecule type" value="Genomic_DNA"/>
</dbReference>
<dbReference type="SMR" id="Q3IHD9"/>
<dbReference type="STRING" id="326442.PSHAa1821"/>
<dbReference type="KEGG" id="pha:PSHAa1821"/>
<dbReference type="PATRIC" id="fig|326442.8.peg.1769"/>
<dbReference type="eggNOG" id="COG4579">
    <property type="taxonomic scope" value="Bacteria"/>
</dbReference>
<dbReference type="HOGENOM" id="CLU_033804_1_1_6"/>
<dbReference type="BioCyc" id="PHAL326442:PSHA_RS08930-MONOMER"/>
<dbReference type="Proteomes" id="UP000006843">
    <property type="component" value="Chromosome I"/>
</dbReference>
<dbReference type="GO" id="GO:0005737">
    <property type="term" value="C:cytoplasm"/>
    <property type="evidence" value="ECO:0007669"/>
    <property type="project" value="UniProtKB-SubCell"/>
</dbReference>
<dbReference type="GO" id="GO:0008772">
    <property type="term" value="F:[isocitrate dehydrogenase (NADP+)] kinase activity"/>
    <property type="evidence" value="ECO:0007669"/>
    <property type="project" value="UniProtKB-UniRule"/>
</dbReference>
<dbReference type="GO" id="GO:0016208">
    <property type="term" value="F:AMP binding"/>
    <property type="evidence" value="ECO:0007669"/>
    <property type="project" value="TreeGrafter"/>
</dbReference>
<dbReference type="GO" id="GO:0005524">
    <property type="term" value="F:ATP binding"/>
    <property type="evidence" value="ECO:0007669"/>
    <property type="project" value="UniProtKB-UniRule"/>
</dbReference>
<dbReference type="GO" id="GO:0004721">
    <property type="term" value="F:phosphoprotein phosphatase activity"/>
    <property type="evidence" value="ECO:0007669"/>
    <property type="project" value="UniProtKB-KW"/>
</dbReference>
<dbReference type="GO" id="GO:0004674">
    <property type="term" value="F:protein serine/threonine kinase activity"/>
    <property type="evidence" value="ECO:0007669"/>
    <property type="project" value="UniProtKB-KW"/>
</dbReference>
<dbReference type="GO" id="GO:0006006">
    <property type="term" value="P:glucose metabolic process"/>
    <property type="evidence" value="ECO:0007669"/>
    <property type="project" value="InterPro"/>
</dbReference>
<dbReference type="GO" id="GO:0006097">
    <property type="term" value="P:glyoxylate cycle"/>
    <property type="evidence" value="ECO:0007669"/>
    <property type="project" value="UniProtKB-UniRule"/>
</dbReference>
<dbReference type="GO" id="GO:0006099">
    <property type="term" value="P:tricarboxylic acid cycle"/>
    <property type="evidence" value="ECO:0007669"/>
    <property type="project" value="UniProtKB-UniRule"/>
</dbReference>
<dbReference type="HAMAP" id="MF_00747">
    <property type="entry name" value="AceK"/>
    <property type="match status" value="1"/>
</dbReference>
<dbReference type="InterPro" id="IPR046855">
    <property type="entry name" value="AceK_kinase"/>
</dbReference>
<dbReference type="InterPro" id="IPR046854">
    <property type="entry name" value="AceK_regulatory"/>
</dbReference>
<dbReference type="InterPro" id="IPR010452">
    <property type="entry name" value="Isocitrate_DH_AceK"/>
</dbReference>
<dbReference type="NCBIfam" id="NF002804">
    <property type="entry name" value="PRK02946.1"/>
    <property type="match status" value="1"/>
</dbReference>
<dbReference type="PANTHER" id="PTHR39559">
    <property type="match status" value="1"/>
</dbReference>
<dbReference type="PANTHER" id="PTHR39559:SF1">
    <property type="entry name" value="ISOCITRATE DEHYDROGENASE KINASE_PHOSPHATASE"/>
    <property type="match status" value="1"/>
</dbReference>
<dbReference type="Pfam" id="PF06315">
    <property type="entry name" value="AceK_kinase"/>
    <property type="match status" value="1"/>
</dbReference>
<dbReference type="Pfam" id="PF20423">
    <property type="entry name" value="AceK_regulatory"/>
    <property type="match status" value="1"/>
</dbReference>
<dbReference type="PIRSF" id="PIRSF000719">
    <property type="entry name" value="AceK"/>
    <property type="match status" value="1"/>
</dbReference>